<feature type="chain" id="PRO_1000148918" description="Imidazole glycerol phosphate synthase subunit HisF">
    <location>
        <begin position="1"/>
        <end position="259"/>
    </location>
</feature>
<feature type="active site" evidence="1">
    <location>
        <position position="11"/>
    </location>
</feature>
<feature type="active site" evidence="1">
    <location>
        <position position="130"/>
    </location>
</feature>
<name>HIS6_ACIET</name>
<accession>B9MDW3</accession>
<keyword id="KW-0028">Amino-acid biosynthesis</keyword>
<keyword id="KW-0963">Cytoplasm</keyword>
<keyword id="KW-0368">Histidine biosynthesis</keyword>
<keyword id="KW-0456">Lyase</keyword>
<keyword id="KW-1185">Reference proteome</keyword>
<evidence type="ECO:0000255" key="1">
    <source>
        <dbReference type="HAMAP-Rule" id="MF_01013"/>
    </source>
</evidence>
<organism>
    <name type="scientific">Acidovorax ebreus (strain TPSY)</name>
    <name type="common">Diaphorobacter sp. (strain TPSY)</name>
    <dbReference type="NCBI Taxonomy" id="535289"/>
    <lineage>
        <taxon>Bacteria</taxon>
        <taxon>Pseudomonadati</taxon>
        <taxon>Pseudomonadota</taxon>
        <taxon>Betaproteobacteria</taxon>
        <taxon>Burkholderiales</taxon>
        <taxon>Comamonadaceae</taxon>
        <taxon>Diaphorobacter</taxon>
    </lineage>
</organism>
<protein>
    <recommendedName>
        <fullName evidence="1">Imidazole glycerol phosphate synthase subunit HisF</fullName>
        <ecNumber evidence="1">4.3.2.10</ecNumber>
    </recommendedName>
    <alternativeName>
        <fullName evidence="1">IGP synthase cyclase subunit</fullName>
    </alternativeName>
    <alternativeName>
        <fullName evidence="1">IGP synthase subunit HisF</fullName>
    </alternativeName>
    <alternativeName>
        <fullName evidence="1">ImGP synthase subunit HisF</fullName>
        <shortName evidence="1">IGPS subunit HisF</shortName>
    </alternativeName>
</protein>
<reference key="1">
    <citation type="submission" date="2009-01" db="EMBL/GenBank/DDBJ databases">
        <title>Complete sequence of Diaphorobacter sp. TPSY.</title>
        <authorList>
            <consortium name="US DOE Joint Genome Institute"/>
            <person name="Lucas S."/>
            <person name="Copeland A."/>
            <person name="Lapidus A."/>
            <person name="Glavina del Rio T."/>
            <person name="Tice H."/>
            <person name="Bruce D."/>
            <person name="Goodwin L."/>
            <person name="Pitluck S."/>
            <person name="Chertkov O."/>
            <person name="Brettin T."/>
            <person name="Detter J.C."/>
            <person name="Han C."/>
            <person name="Larimer F."/>
            <person name="Land M."/>
            <person name="Hauser L."/>
            <person name="Kyrpides N."/>
            <person name="Mikhailova N."/>
            <person name="Coates J.D."/>
        </authorList>
    </citation>
    <scope>NUCLEOTIDE SEQUENCE [LARGE SCALE GENOMIC DNA]</scope>
    <source>
        <strain>TPSY</strain>
    </source>
</reference>
<gene>
    <name evidence="1" type="primary">hisF</name>
    <name type="ordered locus">Dtpsy_0738</name>
</gene>
<sequence>MLAKRIIPCLDVTGGRVVKGVNFVELRDAGDPVEIAARYNAQGADELTFLDITATSDERDLILPIIEAVASQVFIPLTVGGGVRTVEDVRRLLNAGADKTSFNSAAIANPDVISQASAKYGAQCIVVAIDAKRRQGAEVAERGEGWDVYSHGGRKNTGLDAVQWAVEMARRGAGEILLTSMDRDGTKSGFDLQLTRAVSDAVGVPVIASGGVGNLDHLADGVQQGGADAVLAASIFHYGEFTVRQAKERMRERGIPVRL</sequence>
<comment type="function">
    <text evidence="1">IGPS catalyzes the conversion of PRFAR and glutamine to IGP, AICAR and glutamate. The HisF subunit catalyzes the cyclization activity that produces IGP and AICAR from PRFAR using the ammonia provided by the HisH subunit.</text>
</comment>
<comment type="catalytic activity">
    <reaction evidence="1">
        <text>5-[(5-phospho-1-deoxy-D-ribulos-1-ylimino)methylamino]-1-(5-phospho-beta-D-ribosyl)imidazole-4-carboxamide + L-glutamine = D-erythro-1-(imidazol-4-yl)glycerol 3-phosphate + 5-amino-1-(5-phospho-beta-D-ribosyl)imidazole-4-carboxamide + L-glutamate + H(+)</text>
        <dbReference type="Rhea" id="RHEA:24793"/>
        <dbReference type="ChEBI" id="CHEBI:15378"/>
        <dbReference type="ChEBI" id="CHEBI:29985"/>
        <dbReference type="ChEBI" id="CHEBI:58278"/>
        <dbReference type="ChEBI" id="CHEBI:58359"/>
        <dbReference type="ChEBI" id="CHEBI:58475"/>
        <dbReference type="ChEBI" id="CHEBI:58525"/>
        <dbReference type="EC" id="4.3.2.10"/>
    </reaction>
</comment>
<comment type="pathway">
    <text evidence="1">Amino-acid biosynthesis; L-histidine biosynthesis; L-histidine from 5-phospho-alpha-D-ribose 1-diphosphate: step 5/9.</text>
</comment>
<comment type="subunit">
    <text evidence="1">Heterodimer of HisH and HisF.</text>
</comment>
<comment type="subcellular location">
    <subcellularLocation>
        <location evidence="1">Cytoplasm</location>
    </subcellularLocation>
</comment>
<comment type="similarity">
    <text evidence="1">Belongs to the HisA/HisF family.</text>
</comment>
<proteinExistence type="inferred from homology"/>
<dbReference type="EC" id="4.3.2.10" evidence="1"/>
<dbReference type="EMBL" id="CP001392">
    <property type="protein sequence ID" value="ACM32217.1"/>
    <property type="molecule type" value="Genomic_DNA"/>
</dbReference>
<dbReference type="RefSeq" id="WP_011804224.1">
    <property type="nucleotide sequence ID" value="NC_011992.1"/>
</dbReference>
<dbReference type="SMR" id="B9MDW3"/>
<dbReference type="GeneID" id="84682703"/>
<dbReference type="KEGG" id="dia:Dtpsy_0738"/>
<dbReference type="eggNOG" id="COG0107">
    <property type="taxonomic scope" value="Bacteria"/>
</dbReference>
<dbReference type="HOGENOM" id="CLU_048577_4_0_4"/>
<dbReference type="UniPathway" id="UPA00031">
    <property type="reaction ID" value="UER00010"/>
</dbReference>
<dbReference type="Proteomes" id="UP000000450">
    <property type="component" value="Chromosome"/>
</dbReference>
<dbReference type="GO" id="GO:0005737">
    <property type="term" value="C:cytoplasm"/>
    <property type="evidence" value="ECO:0007669"/>
    <property type="project" value="UniProtKB-SubCell"/>
</dbReference>
<dbReference type="GO" id="GO:0000107">
    <property type="term" value="F:imidazoleglycerol-phosphate synthase activity"/>
    <property type="evidence" value="ECO:0007669"/>
    <property type="project" value="UniProtKB-UniRule"/>
</dbReference>
<dbReference type="GO" id="GO:0016829">
    <property type="term" value="F:lyase activity"/>
    <property type="evidence" value="ECO:0007669"/>
    <property type="project" value="UniProtKB-KW"/>
</dbReference>
<dbReference type="GO" id="GO:0000105">
    <property type="term" value="P:L-histidine biosynthetic process"/>
    <property type="evidence" value="ECO:0007669"/>
    <property type="project" value="UniProtKB-UniRule"/>
</dbReference>
<dbReference type="CDD" id="cd04731">
    <property type="entry name" value="HisF"/>
    <property type="match status" value="1"/>
</dbReference>
<dbReference type="FunFam" id="3.20.20.70:FF:000006">
    <property type="entry name" value="Imidazole glycerol phosphate synthase subunit HisF"/>
    <property type="match status" value="1"/>
</dbReference>
<dbReference type="Gene3D" id="3.20.20.70">
    <property type="entry name" value="Aldolase class I"/>
    <property type="match status" value="1"/>
</dbReference>
<dbReference type="HAMAP" id="MF_01013">
    <property type="entry name" value="HisF"/>
    <property type="match status" value="1"/>
</dbReference>
<dbReference type="InterPro" id="IPR013785">
    <property type="entry name" value="Aldolase_TIM"/>
</dbReference>
<dbReference type="InterPro" id="IPR006062">
    <property type="entry name" value="His_biosynth"/>
</dbReference>
<dbReference type="InterPro" id="IPR004651">
    <property type="entry name" value="HisF"/>
</dbReference>
<dbReference type="InterPro" id="IPR050064">
    <property type="entry name" value="IGPS_HisA/HisF"/>
</dbReference>
<dbReference type="InterPro" id="IPR011060">
    <property type="entry name" value="RibuloseP-bd_barrel"/>
</dbReference>
<dbReference type="NCBIfam" id="TIGR00735">
    <property type="entry name" value="hisF"/>
    <property type="match status" value="1"/>
</dbReference>
<dbReference type="PANTHER" id="PTHR21235:SF2">
    <property type="entry name" value="IMIDAZOLE GLYCEROL PHOSPHATE SYNTHASE HISHF"/>
    <property type="match status" value="1"/>
</dbReference>
<dbReference type="PANTHER" id="PTHR21235">
    <property type="entry name" value="IMIDAZOLE GLYCEROL PHOSPHATE SYNTHASE SUBUNIT HISF/H IGP SYNTHASE SUBUNIT HISF/H"/>
    <property type="match status" value="1"/>
</dbReference>
<dbReference type="Pfam" id="PF00977">
    <property type="entry name" value="His_biosynth"/>
    <property type="match status" value="1"/>
</dbReference>
<dbReference type="SUPFAM" id="SSF51366">
    <property type="entry name" value="Ribulose-phoshate binding barrel"/>
    <property type="match status" value="1"/>
</dbReference>